<feature type="chain" id="PRO_0000387430" description="tRNA1(Val) (adenine(37)-N6)-methyltransferase">
    <location>
        <begin position="1"/>
        <end position="236"/>
    </location>
</feature>
<name>TRMN6_SHESR</name>
<dbReference type="EC" id="2.1.1.223" evidence="1"/>
<dbReference type="EMBL" id="CP000444">
    <property type="protein sequence ID" value="ABI44213.1"/>
    <property type="molecule type" value="Genomic_DNA"/>
</dbReference>
<dbReference type="SMR" id="Q0HRP2"/>
<dbReference type="KEGG" id="shm:Shewmr7_3230"/>
<dbReference type="HOGENOM" id="CLU_061983_0_0_6"/>
<dbReference type="GO" id="GO:0005737">
    <property type="term" value="C:cytoplasm"/>
    <property type="evidence" value="ECO:0007669"/>
    <property type="project" value="UniProtKB-SubCell"/>
</dbReference>
<dbReference type="GO" id="GO:0003676">
    <property type="term" value="F:nucleic acid binding"/>
    <property type="evidence" value="ECO:0007669"/>
    <property type="project" value="InterPro"/>
</dbReference>
<dbReference type="GO" id="GO:0016430">
    <property type="term" value="F:tRNA (adenine-N6)-methyltransferase activity"/>
    <property type="evidence" value="ECO:0007669"/>
    <property type="project" value="UniProtKB-UniRule"/>
</dbReference>
<dbReference type="GO" id="GO:0032259">
    <property type="term" value="P:methylation"/>
    <property type="evidence" value="ECO:0007669"/>
    <property type="project" value="UniProtKB-KW"/>
</dbReference>
<dbReference type="GO" id="GO:0008033">
    <property type="term" value="P:tRNA processing"/>
    <property type="evidence" value="ECO:0007669"/>
    <property type="project" value="UniProtKB-UniRule"/>
</dbReference>
<dbReference type="CDD" id="cd02440">
    <property type="entry name" value="AdoMet_MTases"/>
    <property type="match status" value="1"/>
</dbReference>
<dbReference type="Gene3D" id="3.40.50.150">
    <property type="entry name" value="Vaccinia Virus protein VP39"/>
    <property type="match status" value="1"/>
</dbReference>
<dbReference type="HAMAP" id="MF_01872">
    <property type="entry name" value="tRNA_methyltr_YfiC"/>
    <property type="match status" value="1"/>
</dbReference>
<dbReference type="InterPro" id="IPR002052">
    <property type="entry name" value="DNA_methylase_N6_adenine_CS"/>
</dbReference>
<dbReference type="InterPro" id="IPR029063">
    <property type="entry name" value="SAM-dependent_MTases_sf"/>
</dbReference>
<dbReference type="InterPro" id="IPR007848">
    <property type="entry name" value="Small_mtfrase_dom"/>
</dbReference>
<dbReference type="InterPro" id="IPR050210">
    <property type="entry name" value="tRNA_Adenine-N(6)_MTase"/>
</dbReference>
<dbReference type="InterPro" id="IPR022882">
    <property type="entry name" value="tRNA_adenine-N6_MeTrfase"/>
</dbReference>
<dbReference type="PANTHER" id="PTHR47739">
    <property type="entry name" value="TRNA1(VAL) (ADENINE(37)-N6)-METHYLTRANSFERASE"/>
    <property type="match status" value="1"/>
</dbReference>
<dbReference type="PANTHER" id="PTHR47739:SF1">
    <property type="entry name" value="TRNA1(VAL) (ADENINE(37)-N6)-METHYLTRANSFERASE"/>
    <property type="match status" value="1"/>
</dbReference>
<dbReference type="Pfam" id="PF05175">
    <property type="entry name" value="MTS"/>
    <property type="match status" value="1"/>
</dbReference>
<dbReference type="SUPFAM" id="SSF53335">
    <property type="entry name" value="S-adenosyl-L-methionine-dependent methyltransferases"/>
    <property type="match status" value="1"/>
</dbReference>
<dbReference type="PROSITE" id="PS00092">
    <property type="entry name" value="N6_MTASE"/>
    <property type="match status" value="1"/>
</dbReference>
<reference key="1">
    <citation type="submission" date="2006-08" db="EMBL/GenBank/DDBJ databases">
        <title>Complete sequence of chromosome 1 of Shewanella sp. MR-7.</title>
        <authorList>
            <person name="Copeland A."/>
            <person name="Lucas S."/>
            <person name="Lapidus A."/>
            <person name="Barry K."/>
            <person name="Detter J.C."/>
            <person name="Glavina del Rio T."/>
            <person name="Hammon N."/>
            <person name="Israni S."/>
            <person name="Dalin E."/>
            <person name="Tice H."/>
            <person name="Pitluck S."/>
            <person name="Kiss H."/>
            <person name="Brettin T."/>
            <person name="Bruce D."/>
            <person name="Han C."/>
            <person name="Tapia R."/>
            <person name="Gilna P."/>
            <person name="Schmutz J."/>
            <person name="Larimer F."/>
            <person name="Land M."/>
            <person name="Hauser L."/>
            <person name="Kyrpides N."/>
            <person name="Mikhailova N."/>
            <person name="Nealson K."/>
            <person name="Konstantinidis K."/>
            <person name="Klappenbach J."/>
            <person name="Tiedje J."/>
            <person name="Richardson P."/>
        </authorList>
    </citation>
    <scope>NUCLEOTIDE SEQUENCE [LARGE SCALE GENOMIC DNA]</scope>
    <source>
        <strain>MR-7</strain>
    </source>
</reference>
<evidence type="ECO:0000255" key="1">
    <source>
        <dbReference type="HAMAP-Rule" id="MF_01872"/>
    </source>
</evidence>
<comment type="function">
    <text evidence="1">Specifically methylates the adenine in position 37 of tRNA(1)(Val) (anticodon cmo5UAC).</text>
</comment>
<comment type="catalytic activity">
    <reaction evidence="1">
        <text>adenosine(37) in tRNA1(Val) + S-adenosyl-L-methionine = N(6)-methyladenosine(37) in tRNA1(Val) + S-adenosyl-L-homocysteine + H(+)</text>
        <dbReference type="Rhea" id="RHEA:43160"/>
        <dbReference type="Rhea" id="RHEA-COMP:10369"/>
        <dbReference type="Rhea" id="RHEA-COMP:10370"/>
        <dbReference type="ChEBI" id="CHEBI:15378"/>
        <dbReference type="ChEBI" id="CHEBI:57856"/>
        <dbReference type="ChEBI" id="CHEBI:59789"/>
        <dbReference type="ChEBI" id="CHEBI:74411"/>
        <dbReference type="ChEBI" id="CHEBI:74449"/>
        <dbReference type="EC" id="2.1.1.223"/>
    </reaction>
</comment>
<comment type="subcellular location">
    <subcellularLocation>
        <location evidence="1">Cytoplasm</location>
    </subcellularLocation>
</comment>
<comment type="similarity">
    <text evidence="1">Belongs to the methyltransferase superfamily. tRNA (adenine-N(6)-)-methyltransferase family.</text>
</comment>
<gene>
    <name type="ordered locus">Shewmr7_3230</name>
</gene>
<organism>
    <name type="scientific">Shewanella sp. (strain MR-7)</name>
    <dbReference type="NCBI Taxonomy" id="60481"/>
    <lineage>
        <taxon>Bacteria</taxon>
        <taxon>Pseudomonadati</taxon>
        <taxon>Pseudomonadota</taxon>
        <taxon>Gammaproteobacteria</taxon>
        <taxon>Alteromonadales</taxon>
        <taxon>Shewanellaceae</taxon>
        <taxon>Shewanella</taxon>
    </lineage>
</organism>
<accession>Q0HRP2</accession>
<protein>
    <recommendedName>
        <fullName evidence="1">tRNA1(Val) (adenine(37)-N6)-methyltransferase</fullName>
        <ecNumber evidence="1">2.1.1.223</ecNumber>
    </recommendedName>
    <alternativeName>
        <fullName evidence="1">tRNA m6A37 methyltransferase</fullName>
    </alternativeName>
</protein>
<sequence>MAFTFKQFHIDDLNCGMPVSTDGVILGAWAPLAEAKNILDIGAGSGLLSLMAAQRSQGQITAVELEEKAAAACRYNMTQSPWAKRCQLVHGDIQHVCQLAQYQGYFDHIICNPPYFEHGPKASEQHRAMARHTETLGFTPLLDAISQCLSFEGYASLILPIQSLARFKACLNDTALFLVREVWVKSVENKAANRALLLLSKTEVEPYQRTDLTIRGEDGNYTEQMIELTKDFYLKL</sequence>
<proteinExistence type="inferred from homology"/>
<keyword id="KW-0963">Cytoplasm</keyword>
<keyword id="KW-0489">Methyltransferase</keyword>
<keyword id="KW-0949">S-adenosyl-L-methionine</keyword>
<keyword id="KW-0808">Transferase</keyword>
<keyword id="KW-0819">tRNA processing</keyword>